<reference key="1">
    <citation type="journal article" date="2002" name="Proc. Natl. Acad. Sci. U.S.A.">
        <title>The Brucella suis genome reveals fundamental similarities between animal and plant pathogens and symbionts.</title>
        <authorList>
            <person name="Paulsen I.T."/>
            <person name="Seshadri R."/>
            <person name="Nelson K.E."/>
            <person name="Eisen J.A."/>
            <person name="Heidelberg J.F."/>
            <person name="Read T.D."/>
            <person name="Dodson R.J."/>
            <person name="Umayam L.A."/>
            <person name="Brinkac L.M."/>
            <person name="Beanan M.J."/>
            <person name="Daugherty S.C."/>
            <person name="DeBoy R.T."/>
            <person name="Durkin A.S."/>
            <person name="Kolonay J.F."/>
            <person name="Madupu R."/>
            <person name="Nelson W.C."/>
            <person name="Ayodeji B."/>
            <person name="Kraul M."/>
            <person name="Shetty J."/>
            <person name="Malek J.A."/>
            <person name="Van Aken S.E."/>
            <person name="Riedmuller S."/>
            <person name="Tettelin H."/>
            <person name="Gill S.R."/>
            <person name="White O."/>
            <person name="Salzberg S.L."/>
            <person name="Hoover D.L."/>
            <person name="Lindler L.E."/>
            <person name="Halling S.M."/>
            <person name="Boyle S.M."/>
            <person name="Fraser C.M."/>
        </authorList>
    </citation>
    <scope>NUCLEOTIDE SEQUENCE [LARGE SCALE GENOMIC DNA]</scope>
    <source>
        <strain>1330</strain>
    </source>
</reference>
<reference key="2">
    <citation type="journal article" date="2011" name="J. Bacteriol.">
        <title>Revised genome sequence of Brucella suis 1330.</title>
        <authorList>
            <person name="Tae H."/>
            <person name="Shallom S."/>
            <person name="Settlage R."/>
            <person name="Preston D."/>
            <person name="Adams L.G."/>
            <person name="Garner H.R."/>
        </authorList>
    </citation>
    <scope>NUCLEOTIDE SEQUENCE [LARGE SCALE GENOMIC DNA]</scope>
    <source>
        <strain>1330</strain>
    </source>
</reference>
<accession>Q8FWN9</accession>
<accession>G0KCE5</accession>
<evidence type="ECO:0000250" key="1"/>
<evidence type="ECO:0000255" key="2">
    <source>
        <dbReference type="PROSITE-ProRule" id="PRU00441"/>
    </source>
</evidence>
<evidence type="ECO:0000256" key="3">
    <source>
        <dbReference type="SAM" id="MobiDB-lite"/>
    </source>
</evidence>
<evidence type="ECO:0000305" key="4"/>
<comment type="function">
    <text evidence="1">Probably part of an ABC transporter complex that could be involved in peptide import. Probably responsible for the translocation of the substrate across the membrane (By similarity).</text>
</comment>
<comment type="subunit">
    <text evidence="4">The complex is composed of two ATP-binding proteins (BRA0404 and BRA0405), two transmembrane proteins (BRA0407 and BRA0408) and a solute-binding protein (BRA0409).</text>
</comment>
<comment type="subcellular location">
    <subcellularLocation>
        <location evidence="4">Cell inner membrane</location>
        <topology evidence="2">Multi-pass membrane protein</topology>
    </subcellularLocation>
</comment>
<comment type="similarity">
    <text evidence="4">Belongs to the binding-protein-dependent transport system permease family.</text>
</comment>
<organism>
    <name type="scientific">Brucella suis biovar 1 (strain 1330)</name>
    <dbReference type="NCBI Taxonomy" id="204722"/>
    <lineage>
        <taxon>Bacteria</taxon>
        <taxon>Pseudomonadati</taxon>
        <taxon>Pseudomonadota</taxon>
        <taxon>Alphaproteobacteria</taxon>
        <taxon>Hyphomicrobiales</taxon>
        <taxon>Brucellaceae</taxon>
        <taxon>Brucella/Ochrobactrum group</taxon>
        <taxon>Brucella</taxon>
    </lineage>
</organism>
<name>Y3407_BRUSU</name>
<sequence>MRSSIHASRLRKMGQSIPASTGPMARSANRFLQNRAAIFGLVLLTPLLFAVLTYPLWLPYKPNDIDLMAMNSAPSWKHWFGTDGVGRDVFARTMEGGRISLLVAVSSVVLSTAIGFLIGAISALGGRWADAIAMRSVDLAMTLPPVIFLLVLASIIGSGIWSTVVVIALLSWPVLSRMIRARLLELREREFVMASRGMGAGLGHLLFRHGLPNSIDILVVYATLQVANAILLEAGLSFLGLGVPPPAASWGNMLNAARSTAVLEQFPWQWLFPGGALVLAVLAINFIGDGLRDAFDPRAELN</sequence>
<feature type="chain" id="PRO_0000328714" description="Putative peptide permease protein BRA0407/BS1330_II0404">
    <location>
        <begin position="1"/>
        <end position="302"/>
    </location>
</feature>
<feature type="transmembrane region" description="Helical" evidence="2">
    <location>
        <begin position="38"/>
        <end position="58"/>
    </location>
</feature>
<feature type="transmembrane region" description="Helical" evidence="2">
    <location>
        <begin position="101"/>
        <end position="121"/>
    </location>
</feature>
<feature type="transmembrane region" description="Helical" evidence="2">
    <location>
        <begin position="147"/>
        <end position="167"/>
    </location>
</feature>
<feature type="transmembrane region" description="Helical" evidence="2">
    <location>
        <begin position="200"/>
        <end position="222"/>
    </location>
</feature>
<feature type="transmembrane region" description="Helical" evidence="2">
    <location>
        <begin position="230"/>
        <end position="250"/>
    </location>
</feature>
<feature type="transmembrane region" description="Helical" evidence="2">
    <location>
        <begin position="268"/>
        <end position="288"/>
    </location>
</feature>
<feature type="domain" description="ABC transmembrane type-1" evidence="2">
    <location>
        <begin position="97"/>
        <end position="288"/>
    </location>
</feature>
<feature type="region of interest" description="Disordered" evidence="3">
    <location>
        <begin position="1"/>
        <end position="22"/>
    </location>
</feature>
<gene>
    <name type="ordered locus">BRA0407</name>
    <name type="ordered locus">BS1330_II0404</name>
</gene>
<keyword id="KW-0997">Cell inner membrane</keyword>
<keyword id="KW-1003">Cell membrane</keyword>
<keyword id="KW-0472">Membrane</keyword>
<keyword id="KW-0571">Peptide transport</keyword>
<keyword id="KW-0653">Protein transport</keyword>
<keyword id="KW-0812">Transmembrane</keyword>
<keyword id="KW-1133">Transmembrane helix</keyword>
<keyword id="KW-0813">Transport</keyword>
<proteinExistence type="inferred from homology"/>
<protein>
    <recommendedName>
        <fullName>Putative peptide permease protein BRA0407/BS1330_II0404</fullName>
    </recommendedName>
</protein>
<dbReference type="EMBL" id="AE014292">
    <property type="protein sequence ID" value="AAN33604.1"/>
    <property type="molecule type" value="Genomic_DNA"/>
</dbReference>
<dbReference type="EMBL" id="CP002998">
    <property type="protein sequence ID" value="AEM19883.1"/>
    <property type="molecule type" value="Genomic_DNA"/>
</dbReference>
<dbReference type="SMR" id="Q8FWN9"/>
<dbReference type="KEGG" id="bms:BRA0407"/>
<dbReference type="KEGG" id="bsi:BS1330_II0404"/>
<dbReference type="HOGENOM" id="CLU_028518_1_1_5"/>
<dbReference type="Proteomes" id="UP000007104">
    <property type="component" value="Chromosome II"/>
</dbReference>
<dbReference type="GO" id="GO:0005886">
    <property type="term" value="C:plasma membrane"/>
    <property type="evidence" value="ECO:0007669"/>
    <property type="project" value="UniProtKB-SubCell"/>
</dbReference>
<dbReference type="GO" id="GO:0015833">
    <property type="term" value="P:peptide transport"/>
    <property type="evidence" value="ECO:0007669"/>
    <property type="project" value="UniProtKB-KW"/>
</dbReference>
<dbReference type="GO" id="GO:0015031">
    <property type="term" value="P:protein transport"/>
    <property type="evidence" value="ECO:0007669"/>
    <property type="project" value="UniProtKB-KW"/>
</dbReference>
<dbReference type="GO" id="GO:0055085">
    <property type="term" value="P:transmembrane transport"/>
    <property type="evidence" value="ECO:0007669"/>
    <property type="project" value="InterPro"/>
</dbReference>
<dbReference type="CDD" id="cd06261">
    <property type="entry name" value="TM_PBP2"/>
    <property type="match status" value="1"/>
</dbReference>
<dbReference type="Gene3D" id="1.10.3720.10">
    <property type="entry name" value="MetI-like"/>
    <property type="match status" value="1"/>
</dbReference>
<dbReference type="InterPro" id="IPR050366">
    <property type="entry name" value="BP-dependent_transpt_permease"/>
</dbReference>
<dbReference type="InterPro" id="IPR000515">
    <property type="entry name" value="MetI-like"/>
</dbReference>
<dbReference type="InterPro" id="IPR035906">
    <property type="entry name" value="MetI-like_sf"/>
</dbReference>
<dbReference type="InterPro" id="IPR025966">
    <property type="entry name" value="OppC_N"/>
</dbReference>
<dbReference type="PANTHER" id="PTHR43386:SF1">
    <property type="entry name" value="D,D-DIPEPTIDE TRANSPORT SYSTEM PERMEASE PROTEIN DDPC-RELATED"/>
    <property type="match status" value="1"/>
</dbReference>
<dbReference type="PANTHER" id="PTHR43386">
    <property type="entry name" value="OLIGOPEPTIDE TRANSPORT SYSTEM PERMEASE PROTEIN APPC"/>
    <property type="match status" value="1"/>
</dbReference>
<dbReference type="Pfam" id="PF00528">
    <property type="entry name" value="BPD_transp_1"/>
    <property type="match status" value="1"/>
</dbReference>
<dbReference type="Pfam" id="PF12911">
    <property type="entry name" value="OppC_N"/>
    <property type="match status" value="1"/>
</dbReference>
<dbReference type="SUPFAM" id="SSF161098">
    <property type="entry name" value="MetI-like"/>
    <property type="match status" value="1"/>
</dbReference>
<dbReference type="PROSITE" id="PS50928">
    <property type="entry name" value="ABC_TM1"/>
    <property type="match status" value="1"/>
</dbReference>